<feature type="chain" id="PRO_0000309691" description="Hydroxyacylglutathione hydrolase">
    <location>
        <begin position="1"/>
        <end position="255"/>
    </location>
</feature>
<feature type="binding site" evidence="1">
    <location>
        <position position="56"/>
    </location>
    <ligand>
        <name>Zn(2+)</name>
        <dbReference type="ChEBI" id="CHEBI:29105"/>
        <label>1</label>
    </ligand>
</feature>
<feature type="binding site" evidence="1">
    <location>
        <position position="58"/>
    </location>
    <ligand>
        <name>Zn(2+)</name>
        <dbReference type="ChEBI" id="CHEBI:29105"/>
        <label>1</label>
    </ligand>
</feature>
<feature type="binding site" evidence="1">
    <location>
        <position position="60"/>
    </location>
    <ligand>
        <name>Zn(2+)</name>
        <dbReference type="ChEBI" id="CHEBI:29105"/>
        <label>2</label>
    </ligand>
</feature>
<feature type="binding site" evidence="1">
    <location>
        <position position="61"/>
    </location>
    <ligand>
        <name>Zn(2+)</name>
        <dbReference type="ChEBI" id="CHEBI:29105"/>
        <label>2</label>
    </ligand>
</feature>
<feature type="binding site" evidence="1">
    <location>
        <position position="114"/>
    </location>
    <ligand>
        <name>Zn(2+)</name>
        <dbReference type="ChEBI" id="CHEBI:29105"/>
        <label>1</label>
    </ligand>
</feature>
<feature type="binding site" evidence="1">
    <location>
        <position position="133"/>
    </location>
    <ligand>
        <name>Zn(2+)</name>
        <dbReference type="ChEBI" id="CHEBI:29105"/>
        <label>1</label>
    </ligand>
</feature>
<feature type="binding site" evidence="1">
    <location>
        <position position="133"/>
    </location>
    <ligand>
        <name>Zn(2+)</name>
        <dbReference type="ChEBI" id="CHEBI:29105"/>
        <label>2</label>
    </ligand>
</feature>
<feature type="binding site" evidence="1">
    <location>
        <position position="171"/>
    </location>
    <ligand>
        <name>Zn(2+)</name>
        <dbReference type="ChEBI" id="CHEBI:29105"/>
        <label>2</label>
    </ligand>
</feature>
<evidence type="ECO:0000255" key="1">
    <source>
        <dbReference type="HAMAP-Rule" id="MF_01374"/>
    </source>
</evidence>
<accession>A3PIB4</accession>
<keyword id="KW-0378">Hydrolase</keyword>
<keyword id="KW-0479">Metal-binding</keyword>
<keyword id="KW-0862">Zinc</keyword>
<comment type="function">
    <text evidence="1">Thiolesterase that catalyzes the hydrolysis of S-D-lactoyl-glutathione to form glutathione and D-lactic acid.</text>
</comment>
<comment type="catalytic activity">
    <reaction evidence="1">
        <text>an S-(2-hydroxyacyl)glutathione + H2O = a 2-hydroxy carboxylate + glutathione + H(+)</text>
        <dbReference type="Rhea" id="RHEA:21864"/>
        <dbReference type="ChEBI" id="CHEBI:15377"/>
        <dbReference type="ChEBI" id="CHEBI:15378"/>
        <dbReference type="ChEBI" id="CHEBI:57925"/>
        <dbReference type="ChEBI" id="CHEBI:58896"/>
        <dbReference type="ChEBI" id="CHEBI:71261"/>
        <dbReference type="EC" id="3.1.2.6"/>
    </reaction>
</comment>
<comment type="cofactor">
    <cofactor evidence="1">
        <name>Zn(2+)</name>
        <dbReference type="ChEBI" id="CHEBI:29105"/>
    </cofactor>
    <text evidence="1">Binds 2 Zn(2+) ions per subunit.</text>
</comment>
<comment type="pathway">
    <text evidence="1">Secondary metabolite metabolism; methylglyoxal degradation; (R)-lactate from methylglyoxal: step 2/2.</text>
</comment>
<comment type="subunit">
    <text evidence="1">Monomer.</text>
</comment>
<comment type="similarity">
    <text evidence="1">Belongs to the metallo-beta-lactamase superfamily. Glyoxalase II family.</text>
</comment>
<reference key="1">
    <citation type="submission" date="2007-02" db="EMBL/GenBank/DDBJ databases">
        <title>Complete sequence of chromosome 1 of Rhodobacter sphaeroides ATCC 17029.</title>
        <authorList>
            <person name="Copeland A."/>
            <person name="Lucas S."/>
            <person name="Lapidus A."/>
            <person name="Barry K."/>
            <person name="Detter J.C."/>
            <person name="Glavina del Rio T."/>
            <person name="Hammon N."/>
            <person name="Israni S."/>
            <person name="Dalin E."/>
            <person name="Tice H."/>
            <person name="Pitluck S."/>
            <person name="Kiss H."/>
            <person name="Brettin T."/>
            <person name="Bruce D."/>
            <person name="Han C."/>
            <person name="Tapia R."/>
            <person name="Gilna P."/>
            <person name="Schmutz J."/>
            <person name="Larimer F."/>
            <person name="Land M."/>
            <person name="Hauser L."/>
            <person name="Kyrpides N."/>
            <person name="Mikhailova N."/>
            <person name="Richardson P."/>
            <person name="Mackenzie C."/>
            <person name="Choudhary M."/>
            <person name="Donohue T.J."/>
            <person name="Kaplan S."/>
        </authorList>
    </citation>
    <scope>NUCLEOTIDE SEQUENCE [LARGE SCALE GENOMIC DNA]</scope>
    <source>
        <strain>ATCC 17029 / ATH 2.4.9</strain>
    </source>
</reference>
<proteinExistence type="inferred from homology"/>
<protein>
    <recommendedName>
        <fullName evidence="1">Hydroxyacylglutathione hydrolase</fullName>
        <ecNumber evidence="1">3.1.2.6</ecNumber>
    </recommendedName>
    <alternativeName>
        <fullName evidence="1">Glyoxalase II</fullName>
        <shortName evidence="1">Glx II</shortName>
    </alternativeName>
</protein>
<name>GLO2_CERS1</name>
<sequence length="255" mass="27189">MPLELVTVPCLSDNYAFLVHDAGTGETSVVDVPEAGPVLKALEERGWHLSQILLTHHHSDHVAGVEELRAATGARVAGAAADAHRLPPLDLELAEGDLVRVGASEGRVIEVPGHTVGHIAFHFPDSSLAFTGDSLMAMGCGRLFEGTAEAMWQSLRKLSALPPETMICSGHEYAASNARFAATLEPDSPMLIFRVGSIAAARKEGRPTVPSHLSDEIATNPFLRAGEASLKAAVGMVDAEDAEVFAEIRRRKDKF</sequence>
<gene>
    <name evidence="1" type="primary">gloB</name>
    <name type="ordered locus">Rsph17029_0969</name>
</gene>
<organism>
    <name type="scientific">Cereibacter sphaeroides (strain ATCC 17029 / ATH 2.4.9)</name>
    <name type="common">Rhodobacter sphaeroides</name>
    <dbReference type="NCBI Taxonomy" id="349101"/>
    <lineage>
        <taxon>Bacteria</taxon>
        <taxon>Pseudomonadati</taxon>
        <taxon>Pseudomonadota</taxon>
        <taxon>Alphaproteobacteria</taxon>
        <taxon>Rhodobacterales</taxon>
        <taxon>Paracoccaceae</taxon>
        <taxon>Cereibacter</taxon>
    </lineage>
</organism>
<dbReference type="EC" id="3.1.2.6" evidence="1"/>
<dbReference type="EMBL" id="CP000577">
    <property type="protein sequence ID" value="ABN76080.1"/>
    <property type="molecule type" value="Genomic_DNA"/>
</dbReference>
<dbReference type="RefSeq" id="WP_011840721.1">
    <property type="nucleotide sequence ID" value="NC_009049.1"/>
</dbReference>
<dbReference type="SMR" id="A3PIB4"/>
<dbReference type="KEGG" id="rsh:Rsph17029_0969"/>
<dbReference type="HOGENOM" id="CLU_030571_4_1_5"/>
<dbReference type="UniPathway" id="UPA00619">
    <property type="reaction ID" value="UER00676"/>
</dbReference>
<dbReference type="GO" id="GO:0004416">
    <property type="term" value="F:hydroxyacylglutathione hydrolase activity"/>
    <property type="evidence" value="ECO:0007669"/>
    <property type="project" value="UniProtKB-UniRule"/>
</dbReference>
<dbReference type="GO" id="GO:0046872">
    <property type="term" value="F:metal ion binding"/>
    <property type="evidence" value="ECO:0007669"/>
    <property type="project" value="UniProtKB-KW"/>
</dbReference>
<dbReference type="GO" id="GO:0019243">
    <property type="term" value="P:methylglyoxal catabolic process to D-lactate via S-lactoyl-glutathione"/>
    <property type="evidence" value="ECO:0007669"/>
    <property type="project" value="InterPro"/>
</dbReference>
<dbReference type="CDD" id="cd07723">
    <property type="entry name" value="hydroxyacylglutathione_hydrolase_MBL-fold"/>
    <property type="match status" value="1"/>
</dbReference>
<dbReference type="Gene3D" id="3.60.15.10">
    <property type="entry name" value="Ribonuclease Z/Hydroxyacylglutathione hydrolase-like"/>
    <property type="match status" value="1"/>
</dbReference>
<dbReference type="HAMAP" id="MF_01374">
    <property type="entry name" value="Glyoxalase_2"/>
    <property type="match status" value="1"/>
</dbReference>
<dbReference type="InterPro" id="IPR035680">
    <property type="entry name" value="Clx_II_MBL"/>
</dbReference>
<dbReference type="InterPro" id="IPR050110">
    <property type="entry name" value="Glyoxalase_II_hydrolase"/>
</dbReference>
<dbReference type="InterPro" id="IPR032282">
    <property type="entry name" value="HAGH_C"/>
</dbReference>
<dbReference type="InterPro" id="IPR017782">
    <property type="entry name" value="Hydroxyacylglutathione_Hdrlase"/>
</dbReference>
<dbReference type="InterPro" id="IPR001279">
    <property type="entry name" value="Metallo-B-lactamas"/>
</dbReference>
<dbReference type="InterPro" id="IPR036866">
    <property type="entry name" value="RibonucZ/Hydroxyglut_hydro"/>
</dbReference>
<dbReference type="NCBIfam" id="TIGR03413">
    <property type="entry name" value="GSH_gloB"/>
    <property type="match status" value="1"/>
</dbReference>
<dbReference type="PANTHER" id="PTHR43705">
    <property type="entry name" value="HYDROXYACYLGLUTATHIONE HYDROLASE"/>
    <property type="match status" value="1"/>
</dbReference>
<dbReference type="PANTHER" id="PTHR43705:SF1">
    <property type="entry name" value="HYDROXYACYLGLUTATHIONE HYDROLASE GLOB"/>
    <property type="match status" value="1"/>
</dbReference>
<dbReference type="Pfam" id="PF16123">
    <property type="entry name" value="HAGH_C"/>
    <property type="match status" value="1"/>
</dbReference>
<dbReference type="Pfam" id="PF00753">
    <property type="entry name" value="Lactamase_B"/>
    <property type="match status" value="1"/>
</dbReference>
<dbReference type="PIRSF" id="PIRSF005457">
    <property type="entry name" value="Glx"/>
    <property type="match status" value="1"/>
</dbReference>
<dbReference type="SMART" id="SM00849">
    <property type="entry name" value="Lactamase_B"/>
    <property type="match status" value="1"/>
</dbReference>
<dbReference type="SUPFAM" id="SSF56281">
    <property type="entry name" value="Metallo-hydrolase/oxidoreductase"/>
    <property type="match status" value="1"/>
</dbReference>